<keyword id="KW-0472">Membrane</keyword>
<keyword id="KW-0597">Phosphoprotein</keyword>
<keyword id="KW-1185">Reference proteome</keyword>
<keyword id="KW-0812">Transmembrane</keyword>
<keyword id="KW-1133">Transmembrane helix</keyword>
<proteinExistence type="evidence at protein level"/>
<name>F241B_MOUSE</name>
<gene>
    <name evidence="5" type="primary">Fam241b</name>
</gene>
<comment type="function">
    <text evidence="1">May play a role in lysosome homeostasis.</text>
</comment>
<comment type="subcellular location">
    <subcellularLocation>
        <location evidence="4">Membrane</location>
        <topology evidence="2">Single-pass membrane protein</topology>
    </subcellularLocation>
</comment>
<comment type="similarity">
    <text evidence="4">Belongs to the FAM241 family.</text>
</comment>
<reference key="1">
    <citation type="journal article" date="2005" name="Science">
        <title>The transcriptional landscape of the mammalian genome.</title>
        <authorList>
            <person name="Carninci P."/>
            <person name="Kasukawa T."/>
            <person name="Katayama S."/>
            <person name="Gough J."/>
            <person name="Frith M.C."/>
            <person name="Maeda N."/>
            <person name="Oyama R."/>
            <person name="Ravasi T."/>
            <person name="Lenhard B."/>
            <person name="Wells C."/>
            <person name="Kodzius R."/>
            <person name="Shimokawa K."/>
            <person name="Bajic V.B."/>
            <person name="Brenner S.E."/>
            <person name="Batalov S."/>
            <person name="Forrest A.R."/>
            <person name="Zavolan M."/>
            <person name="Davis M.J."/>
            <person name="Wilming L.G."/>
            <person name="Aidinis V."/>
            <person name="Allen J.E."/>
            <person name="Ambesi-Impiombato A."/>
            <person name="Apweiler R."/>
            <person name="Aturaliya R.N."/>
            <person name="Bailey T.L."/>
            <person name="Bansal M."/>
            <person name="Baxter L."/>
            <person name="Beisel K.W."/>
            <person name="Bersano T."/>
            <person name="Bono H."/>
            <person name="Chalk A.M."/>
            <person name="Chiu K.P."/>
            <person name="Choudhary V."/>
            <person name="Christoffels A."/>
            <person name="Clutterbuck D.R."/>
            <person name="Crowe M.L."/>
            <person name="Dalla E."/>
            <person name="Dalrymple B.P."/>
            <person name="de Bono B."/>
            <person name="Della Gatta G."/>
            <person name="di Bernardo D."/>
            <person name="Down T."/>
            <person name="Engstrom P."/>
            <person name="Fagiolini M."/>
            <person name="Faulkner G."/>
            <person name="Fletcher C.F."/>
            <person name="Fukushima T."/>
            <person name="Furuno M."/>
            <person name="Futaki S."/>
            <person name="Gariboldi M."/>
            <person name="Georgii-Hemming P."/>
            <person name="Gingeras T.R."/>
            <person name="Gojobori T."/>
            <person name="Green R.E."/>
            <person name="Gustincich S."/>
            <person name="Harbers M."/>
            <person name="Hayashi Y."/>
            <person name="Hensch T.K."/>
            <person name="Hirokawa N."/>
            <person name="Hill D."/>
            <person name="Huminiecki L."/>
            <person name="Iacono M."/>
            <person name="Ikeo K."/>
            <person name="Iwama A."/>
            <person name="Ishikawa T."/>
            <person name="Jakt M."/>
            <person name="Kanapin A."/>
            <person name="Katoh M."/>
            <person name="Kawasawa Y."/>
            <person name="Kelso J."/>
            <person name="Kitamura H."/>
            <person name="Kitano H."/>
            <person name="Kollias G."/>
            <person name="Krishnan S.P."/>
            <person name="Kruger A."/>
            <person name="Kummerfeld S.K."/>
            <person name="Kurochkin I.V."/>
            <person name="Lareau L.F."/>
            <person name="Lazarevic D."/>
            <person name="Lipovich L."/>
            <person name="Liu J."/>
            <person name="Liuni S."/>
            <person name="McWilliam S."/>
            <person name="Madan Babu M."/>
            <person name="Madera M."/>
            <person name="Marchionni L."/>
            <person name="Matsuda H."/>
            <person name="Matsuzawa S."/>
            <person name="Miki H."/>
            <person name="Mignone F."/>
            <person name="Miyake S."/>
            <person name="Morris K."/>
            <person name="Mottagui-Tabar S."/>
            <person name="Mulder N."/>
            <person name="Nakano N."/>
            <person name="Nakauchi H."/>
            <person name="Ng P."/>
            <person name="Nilsson R."/>
            <person name="Nishiguchi S."/>
            <person name="Nishikawa S."/>
            <person name="Nori F."/>
            <person name="Ohara O."/>
            <person name="Okazaki Y."/>
            <person name="Orlando V."/>
            <person name="Pang K.C."/>
            <person name="Pavan W.J."/>
            <person name="Pavesi G."/>
            <person name="Pesole G."/>
            <person name="Petrovsky N."/>
            <person name="Piazza S."/>
            <person name="Reed J."/>
            <person name="Reid J.F."/>
            <person name="Ring B.Z."/>
            <person name="Ringwald M."/>
            <person name="Rost B."/>
            <person name="Ruan Y."/>
            <person name="Salzberg S.L."/>
            <person name="Sandelin A."/>
            <person name="Schneider C."/>
            <person name="Schoenbach C."/>
            <person name="Sekiguchi K."/>
            <person name="Semple C.A."/>
            <person name="Seno S."/>
            <person name="Sessa L."/>
            <person name="Sheng Y."/>
            <person name="Shibata Y."/>
            <person name="Shimada H."/>
            <person name="Shimada K."/>
            <person name="Silva D."/>
            <person name="Sinclair B."/>
            <person name="Sperling S."/>
            <person name="Stupka E."/>
            <person name="Sugiura K."/>
            <person name="Sultana R."/>
            <person name="Takenaka Y."/>
            <person name="Taki K."/>
            <person name="Tammoja K."/>
            <person name="Tan S.L."/>
            <person name="Tang S."/>
            <person name="Taylor M.S."/>
            <person name="Tegner J."/>
            <person name="Teichmann S.A."/>
            <person name="Ueda H.R."/>
            <person name="van Nimwegen E."/>
            <person name="Verardo R."/>
            <person name="Wei C.L."/>
            <person name="Yagi K."/>
            <person name="Yamanishi H."/>
            <person name="Zabarovsky E."/>
            <person name="Zhu S."/>
            <person name="Zimmer A."/>
            <person name="Hide W."/>
            <person name="Bult C."/>
            <person name="Grimmond S.M."/>
            <person name="Teasdale R.D."/>
            <person name="Liu E.T."/>
            <person name="Brusic V."/>
            <person name="Quackenbush J."/>
            <person name="Wahlestedt C."/>
            <person name="Mattick J.S."/>
            <person name="Hume D.A."/>
            <person name="Kai C."/>
            <person name="Sasaki D."/>
            <person name="Tomaru Y."/>
            <person name="Fukuda S."/>
            <person name="Kanamori-Katayama M."/>
            <person name="Suzuki M."/>
            <person name="Aoki J."/>
            <person name="Arakawa T."/>
            <person name="Iida J."/>
            <person name="Imamura K."/>
            <person name="Itoh M."/>
            <person name="Kato T."/>
            <person name="Kawaji H."/>
            <person name="Kawagashira N."/>
            <person name="Kawashima T."/>
            <person name="Kojima M."/>
            <person name="Kondo S."/>
            <person name="Konno H."/>
            <person name="Nakano K."/>
            <person name="Ninomiya N."/>
            <person name="Nishio T."/>
            <person name="Okada M."/>
            <person name="Plessy C."/>
            <person name="Shibata K."/>
            <person name="Shiraki T."/>
            <person name="Suzuki S."/>
            <person name="Tagami M."/>
            <person name="Waki K."/>
            <person name="Watahiki A."/>
            <person name="Okamura-Oho Y."/>
            <person name="Suzuki H."/>
            <person name="Kawai J."/>
            <person name="Hayashizaki Y."/>
        </authorList>
    </citation>
    <scope>NUCLEOTIDE SEQUENCE [LARGE SCALE MRNA]</scope>
    <source>
        <strain>C57BL/6J</strain>
        <tissue>Small intestine</tissue>
        <tissue>Urinary bladder</tissue>
    </source>
</reference>
<reference key="2">
    <citation type="journal article" date="2004" name="Genome Res.">
        <title>The status, quality, and expansion of the NIH full-length cDNA project: the Mammalian Gene Collection (MGC).</title>
        <authorList>
            <consortium name="The MGC Project Team"/>
        </authorList>
    </citation>
    <scope>NUCLEOTIDE SEQUENCE [LARGE SCALE MRNA]</scope>
    <source>
        <strain>Czech II</strain>
        <tissue>Mammary tumor</tissue>
    </source>
</reference>
<reference key="3">
    <citation type="journal article" date="2010" name="Cell">
        <title>A tissue-specific atlas of mouse protein phosphorylation and expression.</title>
        <authorList>
            <person name="Huttlin E.L."/>
            <person name="Jedrychowski M.P."/>
            <person name="Elias J.E."/>
            <person name="Goswami T."/>
            <person name="Rad R."/>
            <person name="Beausoleil S.A."/>
            <person name="Villen J."/>
            <person name="Haas W."/>
            <person name="Sowa M.E."/>
            <person name="Gygi S.P."/>
        </authorList>
    </citation>
    <scope>IDENTIFICATION BY MASS SPECTROMETRY [LARGE SCALE ANALYSIS]</scope>
    <source>
        <tissue>Brain</tissue>
        <tissue>Kidney</tissue>
        <tissue>Pancreas</tissue>
        <tissue>Testis</tissue>
    </source>
</reference>
<dbReference type="EMBL" id="AK008338">
    <property type="protein sequence ID" value="BAB25613.1"/>
    <property type="molecule type" value="mRNA"/>
</dbReference>
<dbReference type="EMBL" id="AK035688">
    <property type="protein sequence ID" value="BAC29152.1"/>
    <property type="molecule type" value="mRNA"/>
</dbReference>
<dbReference type="EMBL" id="BC024943">
    <property type="protein sequence ID" value="AAH24943.1"/>
    <property type="molecule type" value="mRNA"/>
</dbReference>
<dbReference type="CCDS" id="CCDS23886.1"/>
<dbReference type="RefSeq" id="NP_001345181.1">
    <property type="nucleotide sequence ID" value="NM_001358252.1"/>
</dbReference>
<dbReference type="RefSeq" id="NP_001345182.1">
    <property type="nucleotide sequence ID" value="NM_001358253.1"/>
</dbReference>
<dbReference type="RefSeq" id="NP_081527.1">
    <property type="nucleotide sequence ID" value="NM_027251.4"/>
</dbReference>
<dbReference type="RefSeq" id="XP_006514126.1">
    <property type="nucleotide sequence ID" value="XM_006514063.1"/>
</dbReference>
<dbReference type="RefSeq" id="XP_006514127.1">
    <property type="nucleotide sequence ID" value="XM_006514064.2"/>
</dbReference>
<dbReference type="SMR" id="Q9D882"/>
<dbReference type="FunCoup" id="Q9D882">
    <property type="interactions" value="851"/>
</dbReference>
<dbReference type="IntAct" id="Q9D882">
    <property type="interactions" value="6"/>
</dbReference>
<dbReference type="MINT" id="Q9D882"/>
<dbReference type="STRING" id="10090.ENSMUSP00000115865"/>
<dbReference type="iPTMnet" id="Q9D882"/>
<dbReference type="PhosphoSitePlus" id="Q9D882"/>
<dbReference type="PaxDb" id="10090-ENSMUSP00000116424"/>
<dbReference type="ProteomicsDB" id="275569"/>
<dbReference type="DNASU" id="69894"/>
<dbReference type="Ensembl" id="ENSMUST00000124615.8">
    <property type="protein sequence ID" value="ENSMUSP00000118912.2"/>
    <property type="gene ID" value="ENSMUSG00000020083.15"/>
</dbReference>
<dbReference type="Ensembl" id="ENSMUST00000125704.8">
    <property type="protein sequence ID" value="ENSMUSP00000115865.2"/>
    <property type="gene ID" value="ENSMUSG00000020083.15"/>
</dbReference>
<dbReference type="Ensembl" id="ENSMUST00000142796.8">
    <property type="protein sequence ID" value="ENSMUSP00000116424.2"/>
    <property type="gene ID" value="ENSMUSG00000020083.15"/>
</dbReference>
<dbReference type="Ensembl" id="ENSMUST00000142821.8">
    <property type="protein sequence ID" value="ENSMUSP00000119289.2"/>
    <property type="gene ID" value="ENSMUSG00000020083.15"/>
</dbReference>
<dbReference type="GeneID" id="69894"/>
<dbReference type="KEGG" id="mmu:69894"/>
<dbReference type="UCSC" id="uc007fgs.1">
    <property type="organism name" value="mouse"/>
</dbReference>
<dbReference type="AGR" id="MGI:1917144"/>
<dbReference type="CTD" id="219738"/>
<dbReference type="MGI" id="MGI:1917144">
    <property type="gene designation" value="Fam241b"/>
</dbReference>
<dbReference type="VEuPathDB" id="HostDB:ENSMUSG00000020083"/>
<dbReference type="eggNOG" id="ENOG502S2ZQ">
    <property type="taxonomic scope" value="Eukaryota"/>
</dbReference>
<dbReference type="GeneTree" id="ENSGT00940000170705"/>
<dbReference type="HOGENOM" id="CLU_138765_1_0_1"/>
<dbReference type="InParanoid" id="Q9D882"/>
<dbReference type="OMA" id="LIYIVSH"/>
<dbReference type="PhylomeDB" id="Q9D882"/>
<dbReference type="TreeFam" id="TF335755"/>
<dbReference type="BioGRID-ORCS" id="69894">
    <property type="hits" value="1 hit in 80 CRISPR screens"/>
</dbReference>
<dbReference type="ChiTaRS" id="Fam241b">
    <property type="organism name" value="mouse"/>
</dbReference>
<dbReference type="PRO" id="PR:Q9D882"/>
<dbReference type="Proteomes" id="UP000000589">
    <property type="component" value="Chromosome 10"/>
</dbReference>
<dbReference type="RNAct" id="Q9D882">
    <property type="molecule type" value="protein"/>
</dbReference>
<dbReference type="Bgee" id="ENSMUSG00000020083">
    <property type="expression patterns" value="Expressed in animal zygote and 229 other cell types or tissues"/>
</dbReference>
<dbReference type="ExpressionAtlas" id="Q9D882">
    <property type="expression patterns" value="baseline and differential"/>
</dbReference>
<dbReference type="GO" id="GO:0016020">
    <property type="term" value="C:membrane"/>
    <property type="evidence" value="ECO:0007669"/>
    <property type="project" value="UniProtKB-SubCell"/>
</dbReference>
<dbReference type="InterPro" id="IPR027953">
    <property type="entry name" value="DUF4605"/>
</dbReference>
<dbReference type="InterPro" id="IPR052502">
    <property type="entry name" value="FAM241_domain"/>
</dbReference>
<dbReference type="PANTHER" id="PTHR33690">
    <property type="entry name" value="DUF4605 DOMAIN-CONTAINING PROTEIN"/>
    <property type="match status" value="1"/>
</dbReference>
<dbReference type="PANTHER" id="PTHR33690:SF2">
    <property type="entry name" value="PROTEIN FAM241B"/>
    <property type="match status" value="1"/>
</dbReference>
<dbReference type="Pfam" id="PF15378">
    <property type="entry name" value="DUF4605"/>
    <property type="match status" value="1"/>
</dbReference>
<feature type="chain" id="PRO_0000089791" description="Protein FAM241B">
    <location>
        <begin position="1"/>
        <end position="120"/>
    </location>
</feature>
<feature type="transmembrane region" description="Helical" evidence="2">
    <location>
        <begin position="91"/>
        <end position="111"/>
    </location>
</feature>
<feature type="region of interest" description="Disordered" evidence="3">
    <location>
        <begin position="12"/>
        <end position="59"/>
    </location>
</feature>
<feature type="compositionally biased region" description="Low complexity" evidence="3">
    <location>
        <begin position="19"/>
        <end position="39"/>
    </location>
</feature>
<feature type="compositionally biased region" description="Low complexity" evidence="3">
    <location>
        <begin position="47"/>
        <end position="59"/>
    </location>
</feature>
<feature type="modified residue" description="Phosphoserine" evidence="1">
    <location>
        <position position="61"/>
    </location>
</feature>
<accession>Q9D882</accession>
<evidence type="ECO:0000250" key="1">
    <source>
        <dbReference type="UniProtKB" id="Q96D05"/>
    </source>
</evidence>
<evidence type="ECO:0000255" key="2"/>
<evidence type="ECO:0000256" key="3">
    <source>
        <dbReference type="SAM" id="MobiDB-lite"/>
    </source>
</evidence>
<evidence type="ECO:0000305" key="4"/>
<evidence type="ECO:0000312" key="5">
    <source>
        <dbReference type="MGI" id="MGI:1917144"/>
    </source>
</evidence>
<protein>
    <recommendedName>
        <fullName evidence="4">Protein FAM241B</fullName>
    </recommendedName>
</protein>
<sequence>MVRILANGEIVQDDDPRVRTTTQHRSSSSQQGFFNRGHGAPPGGPGPRQQQAGARLGAAQSPFSDLNRQLVNMGFPQWHLGNHVVEPVTSILLLFLLMMLGVRGLLLVGLVYLVSHLSQR</sequence>
<organism>
    <name type="scientific">Mus musculus</name>
    <name type="common">Mouse</name>
    <dbReference type="NCBI Taxonomy" id="10090"/>
    <lineage>
        <taxon>Eukaryota</taxon>
        <taxon>Metazoa</taxon>
        <taxon>Chordata</taxon>
        <taxon>Craniata</taxon>
        <taxon>Vertebrata</taxon>
        <taxon>Euteleostomi</taxon>
        <taxon>Mammalia</taxon>
        <taxon>Eutheria</taxon>
        <taxon>Euarchontoglires</taxon>
        <taxon>Glires</taxon>
        <taxon>Rodentia</taxon>
        <taxon>Myomorpha</taxon>
        <taxon>Muroidea</taxon>
        <taxon>Muridae</taxon>
        <taxon>Murinae</taxon>
        <taxon>Mus</taxon>
        <taxon>Mus</taxon>
    </lineage>
</organism>